<feature type="chain" id="PRO_1000187862" description="Beta-ketoacyl-[acyl-carrier-protein] synthase III">
    <location>
        <begin position="1"/>
        <end position="346"/>
    </location>
</feature>
<feature type="region of interest" description="ACP-binding" evidence="1">
    <location>
        <begin position="257"/>
        <end position="261"/>
    </location>
</feature>
<feature type="active site" evidence="1">
    <location>
        <position position="120"/>
    </location>
</feature>
<feature type="active site" evidence="1">
    <location>
        <position position="256"/>
    </location>
</feature>
<feature type="active site" evidence="1">
    <location>
        <position position="286"/>
    </location>
</feature>
<evidence type="ECO:0000255" key="1">
    <source>
        <dbReference type="HAMAP-Rule" id="MF_01815"/>
    </source>
</evidence>
<organism>
    <name type="scientific">Deinococcus geothermalis (strain DSM 11300 / CIP 105573 / AG-3a)</name>
    <dbReference type="NCBI Taxonomy" id="319795"/>
    <lineage>
        <taxon>Bacteria</taxon>
        <taxon>Thermotogati</taxon>
        <taxon>Deinococcota</taxon>
        <taxon>Deinococci</taxon>
        <taxon>Deinococcales</taxon>
        <taxon>Deinococcaceae</taxon>
        <taxon>Deinococcus</taxon>
    </lineage>
</organism>
<proteinExistence type="inferred from homology"/>
<keyword id="KW-0012">Acyltransferase</keyword>
<keyword id="KW-0963">Cytoplasm</keyword>
<keyword id="KW-0275">Fatty acid biosynthesis</keyword>
<keyword id="KW-0276">Fatty acid metabolism</keyword>
<keyword id="KW-0444">Lipid biosynthesis</keyword>
<keyword id="KW-0443">Lipid metabolism</keyword>
<keyword id="KW-0511">Multifunctional enzyme</keyword>
<keyword id="KW-0808">Transferase</keyword>
<accession>Q1J198</accession>
<comment type="function">
    <text evidence="1">Catalyzes the condensation reaction of fatty acid synthesis by the addition to an acyl acceptor of two carbons from malonyl-ACP. Catalyzes the first condensation reaction which initiates fatty acid synthesis and may therefore play a role in governing the total rate of fatty acid production. Possesses both acetoacetyl-ACP synthase and acetyl transacylase activities. Its substrate specificity determines the biosynthesis of branched-chain and/or straight-chain of fatty acids.</text>
</comment>
<comment type="catalytic activity">
    <reaction evidence="1">
        <text>malonyl-[ACP] + acetyl-CoA + H(+) = 3-oxobutanoyl-[ACP] + CO2 + CoA</text>
        <dbReference type="Rhea" id="RHEA:12080"/>
        <dbReference type="Rhea" id="RHEA-COMP:9623"/>
        <dbReference type="Rhea" id="RHEA-COMP:9625"/>
        <dbReference type="ChEBI" id="CHEBI:15378"/>
        <dbReference type="ChEBI" id="CHEBI:16526"/>
        <dbReference type="ChEBI" id="CHEBI:57287"/>
        <dbReference type="ChEBI" id="CHEBI:57288"/>
        <dbReference type="ChEBI" id="CHEBI:78449"/>
        <dbReference type="ChEBI" id="CHEBI:78450"/>
        <dbReference type="EC" id="2.3.1.180"/>
    </reaction>
</comment>
<comment type="pathway">
    <text evidence="1">Lipid metabolism; fatty acid biosynthesis.</text>
</comment>
<comment type="subunit">
    <text evidence="1">Homodimer.</text>
</comment>
<comment type="subcellular location">
    <subcellularLocation>
        <location evidence="1">Cytoplasm</location>
    </subcellularLocation>
</comment>
<comment type="domain">
    <text evidence="1">The last Arg residue of the ACP-binding site is essential for the weak association between ACP/AcpP and FabH.</text>
</comment>
<comment type="similarity">
    <text evidence="1">Belongs to the thiolase-like superfamily. FabH family.</text>
</comment>
<dbReference type="EC" id="2.3.1.180" evidence="1"/>
<dbReference type="EMBL" id="CP000359">
    <property type="protein sequence ID" value="ABF44736.1"/>
    <property type="molecule type" value="Genomic_DNA"/>
</dbReference>
<dbReference type="RefSeq" id="WP_011529579.1">
    <property type="nucleotide sequence ID" value="NC_008025.1"/>
</dbReference>
<dbReference type="SMR" id="Q1J198"/>
<dbReference type="STRING" id="319795.Dgeo_0433"/>
<dbReference type="KEGG" id="dge:Dgeo_0433"/>
<dbReference type="eggNOG" id="COG0332">
    <property type="taxonomic scope" value="Bacteria"/>
</dbReference>
<dbReference type="HOGENOM" id="CLU_039592_3_1_0"/>
<dbReference type="UniPathway" id="UPA00094"/>
<dbReference type="Proteomes" id="UP000002431">
    <property type="component" value="Chromosome"/>
</dbReference>
<dbReference type="GO" id="GO:0005737">
    <property type="term" value="C:cytoplasm"/>
    <property type="evidence" value="ECO:0007669"/>
    <property type="project" value="UniProtKB-SubCell"/>
</dbReference>
<dbReference type="GO" id="GO:0004315">
    <property type="term" value="F:3-oxoacyl-[acyl-carrier-protein] synthase activity"/>
    <property type="evidence" value="ECO:0007669"/>
    <property type="project" value="InterPro"/>
</dbReference>
<dbReference type="GO" id="GO:0033818">
    <property type="term" value="F:beta-ketoacyl-acyl-carrier-protein synthase III activity"/>
    <property type="evidence" value="ECO:0007669"/>
    <property type="project" value="UniProtKB-UniRule"/>
</dbReference>
<dbReference type="GO" id="GO:0006633">
    <property type="term" value="P:fatty acid biosynthetic process"/>
    <property type="evidence" value="ECO:0007669"/>
    <property type="project" value="UniProtKB-UniRule"/>
</dbReference>
<dbReference type="GO" id="GO:0044550">
    <property type="term" value="P:secondary metabolite biosynthetic process"/>
    <property type="evidence" value="ECO:0007669"/>
    <property type="project" value="TreeGrafter"/>
</dbReference>
<dbReference type="CDD" id="cd00830">
    <property type="entry name" value="KAS_III"/>
    <property type="match status" value="1"/>
</dbReference>
<dbReference type="FunFam" id="3.40.47.10:FF:000004">
    <property type="entry name" value="3-oxoacyl-[acyl-carrier-protein] synthase 3"/>
    <property type="match status" value="1"/>
</dbReference>
<dbReference type="Gene3D" id="3.40.47.10">
    <property type="match status" value="1"/>
</dbReference>
<dbReference type="HAMAP" id="MF_01815">
    <property type="entry name" value="FabH"/>
    <property type="match status" value="1"/>
</dbReference>
<dbReference type="InterPro" id="IPR013747">
    <property type="entry name" value="ACP_syn_III_C"/>
</dbReference>
<dbReference type="InterPro" id="IPR013751">
    <property type="entry name" value="ACP_syn_III_N"/>
</dbReference>
<dbReference type="InterPro" id="IPR004655">
    <property type="entry name" value="FabH"/>
</dbReference>
<dbReference type="InterPro" id="IPR016039">
    <property type="entry name" value="Thiolase-like"/>
</dbReference>
<dbReference type="NCBIfam" id="TIGR00747">
    <property type="entry name" value="fabH"/>
    <property type="match status" value="1"/>
</dbReference>
<dbReference type="NCBIfam" id="NF006829">
    <property type="entry name" value="PRK09352.1"/>
    <property type="match status" value="1"/>
</dbReference>
<dbReference type="PANTHER" id="PTHR34069">
    <property type="entry name" value="3-OXOACYL-[ACYL-CARRIER-PROTEIN] SYNTHASE 3"/>
    <property type="match status" value="1"/>
</dbReference>
<dbReference type="PANTHER" id="PTHR34069:SF2">
    <property type="entry name" value="BETA-KETOACYL-[ACYL-CARRIER-PROTEIN] SYNTHASE III"/>
    <property type="match status" value="1"/>
</dbReference>
<dbReference type="Pfam" id="PF08545">
    <property type="entry name" value="ACP_syn_III"/>
    <property type="match status" value="1"/>
</dbReference>
<dbReference type="Pfam" id="PF08541">
    <property type="entry name" value="ACP_syn_III_C"/>
    <property type="match status" value="1"/>
</dbReference>
<dbReference type="SUPFAM" id="SSF53901">
    <property type="entry name" value="Thiolase-like"/>
    <property type="match status" value="1"/>
</dbReference>
<protein>
    <recommendedName>
        <fullName evidence="1">Beta-ketoacyl-[acyl-carrier-protein] synthase III</fullName>
        <shortName evidence="1">Beta-ketoacyl-ACP synthase III</shortName>
        <shortName evidence="1">KAS III</shortName>
        <ecNumber evidence="1">2.3.1.180</ecNumber>
    </recommendedName>
    <alternativeName>
        <fullName evidence="1">3-oxoacyl-[acyl-carrier-protein] synthase 3</fullName>
    </alternativeName>
    <alternativeName>
        <fullName evidence="1">3-oxoacyl-[acyl-carrier-protein] synthase III</fullName>
    </alternativeName>
</protein>
<reference key="1">
    <citation type="submission" date="2006-04" db="EMBL/GenBank/DDBJ databases">
        <title>Complete sequence of chromosome of Deinococcus geothermalis DSM 11300.</title>
        <authorList>
            <person name="Copeland A."/>
            <person name="Lucas S."/>
            <person name="Lapidus A."/>
            <person name="Barry K."/>
            <person name="Detter J.C."/>
            <person name="Glavina del Rio T."/>
            <person name="Hammon N."/>
            <person name="Israni S."/>
            <person name="Dalin E."/>
            <person name="Tice H."/>
            <person name="Pitluck S."/>
            <person name="Brettin T."/>
            <person name="Bruce D."/>
            <person name="Han C."/>
            <person name="Tapia R."/>
            <person name="Saunders E."/>
            <person name="Gilna P."/>
            <person name="Schmutz J."/>
            <person name="Larimer F."/>
            <person name="Land M."/>
            <person name="Hauser L."/>
            <person name="Kyrpides N."/>
            <person name="Kim E."/>
            <person name="Daly M.J."/>
            <person name="Fredrickson J.K."/>
            <person name="Makarova K.S."/>
            <person name="Gaidamakova E.K."/>
            <person name="Zhai M."/>
            <person name="Richardson P."/>
        </authorList>
    </citation>
    <scope>NUCLEOTIDE SEQUENCE [LARGE SCALE GENOMIC DNA]</scope>
    <source>
        <strain>DSM 11300 / CIP 105573 / AG-3a</strain>
    </source>
</reference>
<name>FABH_DEIGD</name>
<sequence length="346" mass="36203">MTTPSGSRPSIGITALGTYVPPRVVTNKDFEAHMDTSDEWIVSRTGIRERRFAAENEFTSDLGVRAVQDLLARDPDGLRDVDVVICATATPDALFPSTAALIAGQVGLSGAGAFDLSTACSGFVYALSMAQGLILGGTARRVLVVGAETLSRLVDQHDRSTAILFGDGAGAAVVGPVPQGHGFQEFVLGADSAGGPSLYARCMADRLPGGILMGERVGMNGREVFKFAVRVLGDSGQQVLDKSGLTSADVDWVIPHQANIRIIEAANERFGVPMSKTVVNIDRYGNTSSASLPLALREAVDDGRIQDGQQLLLVAFGGGLSWGACTVKWWAGAPSLTAAQQAEVTA</sequence>
<gene>
    <name evidence="1" type="primary">fabH</name>
    <name type="ordered locus">Dgeo_0433</name>
</gene>